<organism>
    <name type="scientific">Arabidopsis thaliana</name>
    <name type="common">Mouse-ear cress</name>
    <dbReference type="NCBI Taxonomy" id="3702"/>
    <lineage>
        <taxon>Eukaryota</taxon>
        <taxon>Viridiplantae</taxon>
        <taxon>Streptophyta</taxon>
        <taxon>Embryophyta</taxon>
        <taxon>Tracheophyta</taxon>
        <taxon>Spermatophyta</taxon>
        <taxon>Magnoliopsida</taxon>
        <taxon>eudicotyledons</taxon>
        <taxon>Gunneridae</taxon>
        <taxon>Pentapetalae</taxon>
        <taxon>rosids</taxon>
        <taxon>malvids</taxon>
        <taxon>Brassicales</taxon>
        <taxon>Brassicaceae</taxon>
        <taxon>Camelineae</taxon>
        <taxon>Arabidopsis</taxon>
    </lineage>
</organism>
<dbReference type="EMBL" id="AC009323">
    <property type="protein sequence ID" value="AAG09091.1"/>
    <property type="molecule type" value="Genomic_DNA"/>
</dbReference>
<dbReference type="EMBL" id="AC079733">
    <property type="protein sequence ID" value="AAG50736.1"/>
    <property type="molecule type" value="Genomic_DNA"/>
</dbReference>
<dbReference type="EMBL" id="CP002684">
    <property type="protein sequence ID" value="AEE33434.1"/>
    <property type="molecule type" value="Genomic_DNA"/>
</dbReference>
<dbReference type="EMBL" id="DQ446368">
    <property type="protein sequence ID" value="ABE65718.1"/>
    <property type="molecule type" value="mRNA"/>
</dbReference>
<dbReference type="PIR" id="D96609">
    <property type="entry name" value="D96609"/>
</dbReference>
<dbReference type="RefSeq" id="NP_176067.1">
    <property type="nucleotide sequence ID" value="NM_104551.2"/>
</dbReference>
<dbReference type="SMR" id="Q9FE70"/>
<dbReference type="BioGRID" id="27355">
    <property type="interactions" value="27"/>
</dbReference>
<dbReference type="FunCoup" id="Q9FE70">
    <property type="interactions" value="42"/>
</dbReference>
<dbReference type="IntAct" id="Q9FE70">
    <property type="interactions" value="21"/>
</dbReference>
<dbReference type="STRING" id="3702.Q9FE70"/>
<dbReference type="PaxDb" id="3702-AT1G57550.1"/>
<dbReference type="EnsemblPlants" id="AT1G57550.1">
    <property type="protein sequence ID" value="AT1G57550.1"/>
    <property type="gene ID" value="AT1G57550"/>
</dbReference>
<dbReference type="GeneID" id="842130"/>
<dbReference type="Gramene" id="AT1G57550.1">
    <property type="protein sequence ID" value="AT1G57550.1"/>
    <property type="gene ID" value="AT1G57550"/>
</dbReference>
<dbReference type="KEGG" id="ath:AT1G57550"/>
<dbReference type="Araport" id="AT1G57550"/>
<dbReference type="TAIR" id="AT1G57550"/>
<dbReference type="eggNOG" id="KOG1773">
    <property type="taxonomic scope" value="Eukaryota"/>
</dbReference>
<dbReference type="HOGENOM" id="CLU_107649_6_2_1"/>
<dbReference type="InParanoid" id="Q9FE70"/>
<dbReference type="OMA" id="GLEFWVC"/>
<dbReference type="OrthoDB" id="2802411at2759"/>
<dbReference type="PhylomeDB" id="Q9FE70"/>
<dbReference type="PRO" id="PR:Q9FE70"/>
<dbReference type="Proteomes" id="UP000006548">
    <property type="component" value="Chromosome 1"/>
</dbReference>
<dbReference type="ExpressionAtlas" id="Q9FE70">
    <property type="expression patterns" value="baseline and differential"/>
</dbReference>
<dbReference type="GO" id="GO:0016020">
    <property type="term" value="C:membrane"/>
    <property type="evidence" value="ECO:0007669"/>
    <property type="project" value="UniProtKB-SubCell"/>
</dbReference>
<dbReference type="InterPro" id="IPR000612">
    <property type="entry name" value="PMP3"/>
</dbReference>
<dbReference type="PANTHER" id="PTHR21659">
    <property type="entry name" value="HYDROPHOBIC PROTEIN RCI2 LOW TEMPERATURE AND SALT RESPONSIVE PROTEIN LTI6 -RELATED"/>
    <property type="match status" value="1"/>
</dbReference>
<dbReference type="PANTHER" id="PTHR21659:SF117">
    <property type="entry name" value="OS03G0286900 PROTEIN"/>
    <property type="match status" value="1"/>
</dbReference>
<dbReference type="Pfam" id="PF01679">
    <property type="entry name" value="Pmp3"/>
    <property type="match status" value="1"/>
</dbReference>
<dbReference type="PROSITE" id="PS01309">
    <property type="entry name" value="UPF0057"/>
    <property type="match status" value="1"/>
</dbReference>
<protein>
    <recommendedName>
        <fullName>UPF0057 membrane protein At1g57550</fullName>
    </recommendedName>
</protein>
<accession>Q9FE70</accession>
<accession>Q1PFJ5</accession>
<feature type="chain" id="PRO_0000193974" description="UPF0057 membrane protein At1g57550">
    <location>
        <begin position="1"/>
        <end position="52"/>
    </location>
</feature>
<feature type="transmembrane region" description="Helical" evidence="1">
    <location>
        <begin position="4"/>
        <end position="24"/>
    </location>
</feature>
<feature type="transmembrane region" description="Helical" evidence="1">
    <location>
        <begin position="30"/>
        <end position="50"/>
    </location>
</feature>
<evidence type="ECO:0000255" key="1"/>
<evidence type="ECO:0000305" key="2"/>
<comment type="subcellular location">
    <subcellularLocation>
        <location evidence="2">Membrane</location>
        <topology evidence="2">Multi-pass membrane protein</topology>
    </subcellularLocation>
</comment>
<comment type="similarity">
    <text evidence="2">Belongs to the UPF0057 (PMP3) family.</text>
</comment>
<sequence>MGSFLEVLCAIFIPPVGVFLRYGLGLEFWVCLLLTLFAFIPGLIYAIYVLTK</sequence>
<reference key="1">
    <citation type="journal article" date="2000" name="Nature">
        <title>Sequence and analysis of chromosome 1 of the plant Arabidopsis thaliana.</title>
        <authorList>
            <person name="Theologis A."/>
            <person name="Ecker J.R."/>
            <person name="Palm C.J."/>
            <person name="Federspiel N.A."/>
            <person name="Kaul S."/>
            <person name="White O."/>
            <person name="Alonso J."/>
            <person name="Altafi H."/>
            <person name="Araujo R."/>
            <person name="Bowman C.L."/>
            <person name="Brooks S.Y."/>
            <person name="Buehler E."/>
            <person name="Chan A."/>
            <person name="Chao Q."/>
            <person name="Chen H."/>
            <person name="Cheuk R.F."/>
            <person name="Chin C.W."/>
            <person name="Chung M.K."/>
            <person name="Conn L."/>
            <person name="Conway A.B."/>
            <person name="Conway A.R."/>
            <person name="Creasy T.H."/>
            <person name="Dewar K."/>
            <person name="Dunn P."/>
            <person name="Etgu P."/>
            <person name="Feldblyum T.V."/>
            <person name="Feng J.-D."/>
            <person name="Fong B."/>
            <person name="Fujii C.Y."/>
            <person name="Gill J.E."/>
            <person name="Goldsmith A.D."/>
            <person name="Haas B."/>
            <person name="Hansen N.F."/>
            <person name="Hughes B."/>
            <person name="Huizar L."/>
            <person name="Hunter J.L."/>
            <person name="Jenkins J."/>
            <person name="Johnson-Hopson C."/>
            <person name="Khan S."/>
            <person name="Khaykin E."/>
            <person name="Kim C.J."/>
            <person name="Koo H.L."/>
            <person name="Kremenetskaia I."/>
            <person name="Kurtz D.B."/>
            <person name="Kwan A."/>
            <person name="Lam B."/>
            <person name="Langin-Hooper S."/>
            <person name="Lee A."/>
            <person name="Lee J.M."/>
            <person name="Lenz C.A."/>
            <person name="Li J.H."/>
            <person name="Li Y.-P."/>
            <person name="Lin X."/>
            <person name="Liu S.X."/>
            <person name="Liu Z.A."/>
            <person name="Luros J.S."/>
            <person name="Maiti R."/>
            <person name="Marziali A."/>
            <person name="Militscher J."/>
            <person name="Miranda M."/>
            <person name="Nguyen M."/>
            <person name="Nierman W.C."/>
            <person name="Osborne B.I."/>
            <person name="Pai G."/>
            <person name="Peterson J."/>
            <person name="Pham P.K."/>
            <person name="Rizzo M."/>
            <person name="Rooney T."/>
            <person name="Rowley D."/>
            <person name="Sakano H."/>
            <person name="Salzberg S.L."/>
            <person name="Schwartz J.R."/>
            <person name="Shinn P."/>
            <person name="Southwick A.M."/>
            <person name="Sun H."/>
            <person name="Tallon L.J."/>
            <person name="Tambunga G."/>
            <person name="Toriumi M.J."/>
            <person name="Town C.D."/>
            <person name="Utterback T."/>
            <person name="Van Aken S."/>
            <person name="Vaysberg M."/>
            <person name="Vysotskaia V.S."/>
            <person name="Walker M."/>
            <person name="Wu D."/>
            <person name="Yu G."/>
            <person name="Fraser C.M."/>
            <person name="Venter J.C."/>
            <person name="Davis R.W."/>
        </authorList>
    </citation>
    <scope>NUCLEOTIDE SEQUENCE [LARGE SCALE GENOMIC DNA]</scope>
    <source>
        <strain>cv. Columbia</strain>
    </source>
</reference>
<reference key="2">
    <citation type="journal article" date="2017" name="Plant J.">
        <title>Araport11: a complete reannotation of the Arabidopsis thaliana reference genome.</title>
        <authorList>
            <person name="Cheng C.Y."/>
            <person name="Krishnakumar V."/>
            <person name="Chan A.P."/>
            <person name="Thibaud-Nissen F."/>
            <person name="Schobel S."/>
            <person name="Town C.D."/>
        </authorList>
    </citation>
    <scope>GENOME REANNOTATION</scope>
    <source>
        <strain>cv. Columbia</strain>
    </source>
</reference>
<reference key="3">
    <citation type="journal article" date="2006" name="Plant Biotechnol. J.">
        <title>Simultaneous high-throughput recombinational cloning of open reading frames in closed and open configurations.</title>
        <authorList>
            <person name="Underwood B.A."/>
            <person name="Vanderhaeghen R."/>
            <person name="Whitford R."/>
            <person name="Town C.D."/>
            <person name="Hilson P."/>
        </authorList>
    </citation>
    <scope>NUCLEOTIDE SEQUENCE [LARGE SCALE MRNA]</scope>
    <source>
        <strain>cv. Columbia</strain>
    </source>
</reference>
<keyword id="KW-0472">Membrane</keyword>
<keyword id="KW-1185">Reference proteome</keyword>
<keyword id="KW-0812">Transmembrane</keyword>
<keyword id="KW-1133">Transmembrane helix</keyword>
<proteinExistence type="inferred from homology"/>
<name>RC21_ARATH</name>
<gene>
    <name type="ordered locus">At1g57550</name>
    <name type="ORF">F25P12.2</name>
    <name type="ORF">T8L23.2</name>
</gene>